<comment type="function">
    <text evidence="2">Component of the type II secretion system inner membrane complex required for the energy-dependent secretion of extracellular factors such as proteases and toxins from the periplasm.</text>
</comment>
<comment type="subunit">
    <text evidence="1 2 4">Type II secretion system is composed of four main components: the outer membrane complex, the inner membrane complex, the cytoplasmic secretion ATPase and the periplasm-spanning pseudopilus (By similarity). Homodimer (By similarity). Interacts with XcpR/GspE and XcpY/GspL components (PubMed:17464073).</text>
</comment>
<comment type="subcellular location">
    <subcellularLocation>
        <location evidence="5">Cell inner membrane</location>
        <topology evidence="5">Multi-pass membrane protein</topology>
    </subcellularLocation>
</comment>
<comment type="similarity">
    <text evidence="5">Belongs to the GSP F family.</text>
</comment>
<sequence>MAAFEYLALDPSGRQQKGVLEADSARQVRQLLRERQLAPLDVKPTRTREQSGQGGRLTFARGLSARDLALVTRQLATLVQAALPIEEALRAAAAQSTSQRIQSMLLAVRAKVLEGHSLAGSLREFPTAFPELYRATVAAGEHAGHLGPVLEQLADYTEQRQQSRQKIQLALLYPVILMVASLAIVGFLLGYVVPDVVRVFIDSGQTLPLLTRVLIGVSDWVKAWGALAFVAAIGGVIGFRYALRKDAFRERWHGFLLRVPLVGRLVRSTDTARFASTLAILTRSGVPLVEALAIAAEVIANRIIRNEVVKAAQKVREGASLTRSLEATGQFPPMMLHMIASGERSGELDQMLARTARNQENDLAAQIGLMVGLFEPFMLIFMGAVVLVIVLAILLPILSLNQLVG</sequence>
<dbReference type="EMBL" id="X62666">
    <property type="protein sequence ID" value="CAA44534.1"/>
    <property type="molecule type" value="Genomic_DNA"/>
</dbReference>
<dbReference type="EMBL" id="AE004091">
    <property type="protein sequence ID" value="AAG06490.1"/>
    <property type="molecule type" value="Genomic_DNA"/>
</dbReference>
<dbReference type="PIR" id="S25385">
    <property type="entry name" value="SKPSXS"/>
</dbReference>
<dbReference type="RefSeq" id="NP_251792.1">
    <property type="nucleotide sequence ID" value="NC_002516.2"/>
</dbReference>
<dbReference type="RefSeq" id="WP_003091376.1">
    <property type="nucleotide sequence ID" value="NZ_QZGE01000009.1"/>
</dbReference>
<dbReference type="SMR" id="Q00513"/>
<dbReference type="FunCoup" id="Q00513">
    <property type="interactions" value="337"/>
</dbReference>
<dbReference type="STRING" id="208964.PA3102"/>
<dbReference type="PaxDb" id="208964-PA3102"/>
<dbReference type="GeneID" id="878732"/>
<dbReference type="KEGG" id="pae:PA3102"/>
<dbReference type="PATRIC" id="fig|208964.12.peg.3254"/>
<dbReference type="PseudoCAP" id="PA3102"/>
<dbReference type="HOGENOM" id="CLU_035032_0_1_6"/>
<dbReference type="InParanoid" id="Q00513"/>
<dbReference type="OrthoDB" id="9805682at2"/>
<dbReference type="PhylomeDB" id="Q00513"/>
<dbReference type="BioCyc" id="PAER208964:G1FZ6-3158-MONOMER"/>
<dbReference type="Proteomes" id="UP000002438">
    <property type="component" value="Chromosome"/>
</dbReference>
<dbReference type="GO" id="GO:0005886">
    <property type="term" value="C:plasma membrane"/>
    <property type="evidence" value="ECO:0000318"/>
    <property type="project" value="GO_Central"/>
</dbReference>
<dbReference type="GO" id="GO:0015627">
    <property type="term" value="C:type II protein secretion system complex"/>
    <property type="evidence" value="ECO:0000314"/>
    <property type="project" value="PseudoCAP"/>
</dbReference>
<dbReference type="GO" id="GO:0046872">
    <property type="term" value="F:metal ion binding"/>
    <property type="evidence" value="ECO:0007669"/>
    <property type="project" value="UniProtKB-KW"/>
</dbReference>
<dbReference type="GO" id="GO:0015628">
    <property type="term" value="P:protein secretion by the type II secretion system"/>
    <property type="evidence" value="ECO:0000314"/>
    <property type="project" value="PseudoCAP"/>
</dbReference>
<dbReference type="FunFam" id="1.20.81.30:FF:000001">
    <property type="entry name" value="Type II secretion system protein F"/>
    <property type="match status" value="2"/>
</dbReference>
<dbReference type="Gene3D" id="1.20.81.30">
    <property type="entry name" value="Type II secretion system (T2SS), domain F"/>
    <property type="match status" value="2"/>
</dbReference>
<dbReference type="InterPro" id="IPR003004">
    <property type="entry name" value="GspF/PilC"/>
</dbReference>
<dbReference type="InterPro" id="IPR011850">
    <property type="entry name" value="T2SS_GspF"/>
</dbReference>
<dbReference type="InterPro" id="IPR001992">
    <property type="entry name" value="T2SS_GspF/T4SS_PilC_CS"/>
</dbReference>
<dbReference type="InterPro" id="IPR018076">
    <property type="entry name" value="T2SS_GspF_dom"/>
</dbReference>
<dbReference type="InterPro" id="IPR042094">
    <property type="entry name" value="T2SS_GspF_sf"/>
</dbReference>
<dbReference type="NCBIfam" id="TIGR02120">
    <property type="entry name" value="GspF"/>
    <property type="match status" value="1"/>
</dbReference>
<dbReference type="PANTHER" id="PTHR30012">
    <property type="entry name" value="GENERAL SECRETION PATHWAY PROTEIN"/>
    <property type="match status" value="1"/>
</dbReference>
<dbReference type="PANTHER" id="PTHR30012:SF0">
    <property type="entry name" value="TYPE II SECRETION SYSTEM PROTEIN F-RELATED"/>
    <property type="match status" value="1"/>
</dbReference>
<dbReference type="Pfam" id="PF00482">
    <property type="entry name" value="T2SSF"/>
    <property type="match status" value="2"/>
</dbReference>
<dbReference type="PRINTS" id="PR00812">
    <property type="entry name" value="BCTERIALGSPF"/>
</dbReference>
<dbReference type="PROSITE" id="PS00874">
    <property type="entry name" value="T2SP_F"/>
    <property type="match status" value="1"/>
</dbReference>
<accession>Q00513</accession>
<reference key="1">
    <citation type="journal article" date="1992" name="Mol. Microbiol.">
        <title>Protein secretion in Pseudomonas aeruginosa: characterization of seven xcp genes and processing of secretory apparatus components by prepilin peptidase.</title>
        <authorList>
            <person name="Bally M."/>
            <person name="Filloux A."/>
            <person name="Akrim M."/>
            <person name="Ball G."/>
            <person name="Lazdunski A."/>
            <person name="Tommassen J."/>
        </authorList>
    </citation>
    <scope>NUCLEOTIDE SEQUENCE [GENOMIC DNA]</scope>
    <source>
        <strain>ATCC 15692 / DSM 22644 / CIP 104116 / JCM 14847 / LMG 12228 / 1C / PRS 101 / PAO1</strain>
    </source>
</reference>
<reference key="2">
    <citation type="journal article" date="2000" name="Nature">
        <title>Complete genome sequence of Pseudomonas aeruginosa PAO1, an opportunistic pathogen.</title>
        <authorList>
            <person name="Stover C.K."/>
            <person name="Pham X.-Q.T."/>
            <person name="Erwin A.L."/>
            <person name="Mizoguchi S.D."/>
            <person name="Warrener P."/>
            <person name="Hickey M.J."/>
            <person name="Brinkman F.S.L."/>
            <person name="Hufnagle W.O."/>
            <person name="Kowalik D.J."/>
            <person name="Lagrou M."/>
            <person name="Garber R.L."/>
            <person name="Goltry L."/>
            <person name="Tolentino E."/>
            <person name="Westbrock-Wadman S."/>
            <person name="Yuan Y."/>
            <person name="Brody L.L."/>
            <person name="Coulter S.N."/>
            <person name="Folger K.R."/>
            <person name="Kas A."/>
            <person name="Larbig K."/>
            <person name="Lim R.M."/>
            <person name="Smith K.A."/>
            <person name="Spencer D.H."/>
            <person name="Wong G.K.-S."/>
            <person name="Wu Z."/>
            <person name="Paulsen I.T."/>
            <person name="Reizer J."/>
            <person name="Saier M.H. Jr."/>
            <person name="Hancock R.E.W."/>
            <person name="Lory S."/>
            <person name="Olson M.V."/>
        </authorList>
    </citation>
    <scope>NUCLEOTIDE SEQUENCE [LARGE SCALE GENOMIC DNA]</scope>
    <source>
        <strain>ATCC 15692 / DSM 22644 / CIP 104116 / JCM 14847 / LMG 12228 / 1C / PRS 101 / PAO1</strain>
    </source>
</reference>
<reference key="3">
    <citation type="journal article" date="2007" name="Microbiology">
        <title>Interaction domains in the Pseudomonas aeruginosa type II secretory apparatus component XcpS (GspF).</title>
        <authorList>
            <person name="Arts J."/>
            <person name="de Groot A."/>
            <person name="Ball G."/>
            <person name="Durand E."/>
            <person name="Khattabi M.E."/>
            <person name="Filloux A."/>
            <person name="Tommassen J."/>
            <person name="Koster M."/>
        </authorList>
    </citation>
    <scope>TOPOLOGY</scope>
    <scope>INTERACTION WITH XCPR AND XCPY</scope>
</reference>
<name>GSPF_PSEAE</name>
<proteinExistence type="evidence at protein level"/>
<feature type="chain" id="PRO_0000207835" description="Type II secretion system protein F">
    <location>
        <begin position="1"/>
        <end position="405"/>
    </location>
</feature>
<feature type="topological domain" description="Cytoplasmic" evidence="4">
    <location>
        <begin position="1"/>
        <end position="168"/>
    </location>
</feature>
<feature type="transmembrane region" description="Helical" evidence="3">
    <location>
        <begin position="169"/>
        <end position="189"/>
    </location>
</feature>
<feature type="topological domain" description="Periplasmic" evidence="4">
    <location>
        <begin position="190"/>
        <end position="219"/>
    </location>
</feature>
<feature type="transmembrane region" description="Helical" evidence="3">
    <location>
        <begin position="220"/>
        <end position="239"/>
    </location>
</feature>
<feature type="topological domain" description="Cytoplasmic" evidence="4">
    <location>
        <begin position="240"/>
        <end position="376"/>
    </location>
</feature>
<feature type="transmembrane region" description="Helical" evidence="3">
    <location>
        <begin position="377"/>
        <end position="397"/>
    </location>
</feature>
<feature type="topological domain" description="Periplasmic" evidence="6">
    <location>
        <begin position="398"/>
        <end position="405"/>
    </location>
</feature>
<feature type="binding site" evidence="1">
    <location>
        <position position="97"/>
    </location>
    <ligand>
        <name>Ca(2+)</name>
        <dbReference type="ChEBI" id="CHEBI:29108"/>
    </ligand>
</feature>
<feature type="binding site" evidence="1">
    <location>
        <position position="151"/>
    </location>
    <ligand>
        <name>Ca(2+)</name>
        <dbReference type="ChEBI" id="CHEBI:29108"/>
    </ligand>
</feature>
<feature type="binding site" evidence="1">
    <location>
        <position position="155"/>
    </location>
    <ligand>
        <name>Ca(2+)</name>
        <dbReference type="ChEBI" id="CHEBI:29108"/>
    </ligand>
</feature>
<organism>
    <name type="scientific">Pseudomonas aeruginosa (strain ATCC 15692 / DSM 22644 / CIP 104116 / JCM 14847 / LMG 12228 / 1C / PRS 101 / PAO1)</name>
    <dbReference type="NCBI Taxonomy" id="208964"/>
    <lineage>
        <taxon>Bacteria</taxon>
        <taxon>Pseudomonadati</taxon>
        <taxon>Pseudomonadota</taxon>
        <taxon>Gammaproteobacteria</taxon>
        <taxon>Pseudomonadales</taxon>
        <taxon>Pseudomonadaceae</taxon>
        <taxon>Pseudomonas</taxon>
    </lineage>
</organism>
<evidence type="ECO:0000250" key="1">
    <source>
        <dbReference type="UniProtKB" id="P45780"/>
    </source>
</evidence>
<evidence type="ECO:0000250" key="2">
    <source>
        <dbReference type="UniProtKB" id="Q00514"/>
    </source>
</evidence>
<evidence type="ECO:0000255" key="3"/>
<evidence type="ECO:0000269" key="4">
    <source>
    </source>
</evidence>
<evidence type="ECO:0000305" key="5"/>
<evidence type="ECO:0000305" key="6">
    <source>
    </source>
</evidence>
<protein>
    <recommendedName>
        <fullName>Type II secretion system protein F</fullName>
        <shortName>T2SS protein F</shortName>
    </recommendedName>
    <alternativeName>
        <fullName>General secretion pathway protein F</fullName>
    </alternativeName>
</protein>
<keyword id="KW-0106">Calcium</keyword>
<keyword id="KW-0997">Cell inner membrane</keyword>
<keyword id="KW-1003">Cell membrane</keyword>
<keyword id="KW-0472">Membrane</keyword>
<keyword id="KW-0479">Metal-binding</keyword>
<keyword id="KW-0653">Protein transport</keyword>
<keyword id="KW-1185">Reference proteome</keyword>
<keyword id="KW-0812">Transmembrane</keyword>
<keyword id="KW-1133">Transmembrane helix</keyword>
<keyword id="KW-0813">Transport</keyword>
<gene>
    <name type="primary">xcpS</name>
    <name type="ordered locus">PA3102</name>
</gene>